<comment type="subcellular location">
    <subcellularLocation>
        <location evidence="3">Cell membrane</location>
        <topology evidence="3">Multi-pass membrane protein</topology>
    </subcellularLocation>
</comment>
<dbReference type="EMBL" id="AE000516">
    <property type="protein sequence ID" value="AAK46548.1"/>
    <property type="molecule type" value="Genomic_DNA"/>
</dbReference>
<dbReference type="PIR" id="G70785">
    <property type="entry name" value="G70785"/>
</dbReference>
<dbReference type="RefSeq" id="WP_003411425.1">
    <property type="nucleotide sequence ID" value="NZ_KK341227.1"/>
</dbReference>
<dbReference type="KEGG" id="mtc:MT2262"/>
<dbReference type="PATRIC" id="fig|83331.31.peg.2437"/>
<dbReference type="HOGENOM" id="CLU_091328_0_0_11"/>
<dbReference type="Proteomes" id="UP000001020">
    <property type="component" value="Chromosome"/>
</dbReference>
<dbReference type="GO" id="GO:0005886">
    <property type="term" value="C:plasma membrane"/>
    <property type="evidence" value="ECO:0007669"/>
    <property type="project" value="UniProtKB-SubCell"/>
</dbReference>
<dbReference type="InterPro" id="IPR021403">
    <property type="entry name" value="DUF3043"/>
</dbReference>
<dbReference type="Pfam" id="PF11241">
    <property type="entry name" value="DUF3043"/>
    <property type="match status" value="1"/>
</dbReference>
<organism>
    <name type="scientific">Mycobacterium tuberculosis (strain CDC 1551 / Oshkosh)</name>
    <dbReference type="NCBI Taxonomy" id="83331"/>
    <lineage>
        <taxon>Bacteria</taxon>
        <taxon>Bacillati</taxon>
        <taxon>Actinomycetota</taxon>
        <taxon>Actinomycetes</taxon>
        <taxon>Mycobacteriales</taxon>
        <taxon>Mycobacteriaceae</taxon>
        <taxon>Mycobacterium</taxon>
        <taxon>Mycobacterium tuberculosis complex</taxon>
    </lineage>
</organism>
<reference key="1">
    <citation type="journal article" date="2002" name="J. Bacteriol.">
        <title>Whole-genome comparison of Mycobacterium tuberculosis clinical and laboratory strains.</title>
        <authorList>
            <person name="Fleischmann R.D."/>
            <person name="Alland D."/>
            <person name="Eisen J.A."/>
            <person name="Carpenter L."/>
            <person name="White O."/>
            <person name="Peterson J.D."/>
            <person name="DeBoy R.T."/>
            <person name="Dodson R.J."/>
            <person name="Gwinn M.L."/>
            <person name="Haft D.H."/>
            <person name="Hickey E.K."/>
            <person name="Kolonay J.F."/>
            <person name="Nelson W.C."/>
            <person name="Umayam L.A."/>
            <person name="Ermolaeva M.D."/>
            <person name="Salzberg S.L."/>
            <person name="Delcher A."/>
            <person name="Utterback T.R."/>
            <person name="Weidman J.F."/>
            <person name="Khouri H.M."/>
            <person name="Gill J."/>
            <person name="Mikula A."/>
            <person name="Bishai W."/>
            <person name="Jacobs W.R. Jr."/>
            <person name="Venter J.C."/>
            <person name="Fraser C.M."/>
        </authorList>
    </citation>
    <scope>NUCLEOTIDE SEQUENCE [LARGE SCALE GENOMIC DNA]</scope>
    <source>
        <strain>CDC 1551 / Oshkosh</strain>
    </source>
</reference>
<sequence>MKLLGHRKSHGHQRADASPDAGSKDGCRPDSGRTSGSDTSRGSQTTGPKGRPTPKRNQSRRHTKKGPVAPAPMTAAQARARRKSLAGPKLSREERRAEKAANRARMTERRERMMAGEEAYLLPRDRGPVRRYVRDVVDSRRNLLGLFMPSALTLLFVMFAVPQVQFYLSPAMLILLALMTIDAIILGRKVGRLVDTKFPSNTESRWRLGLYAAGRASQIRRLRAPRPQVERGGDVG</sequence>
<protein>
    <recommendedName>
        <fullName>Uncharacterized protein MT2262</fullName>
    </recommendedName>
</protein>
<evidence type="ECO:0000255" key="1"/>
<evidence type="ECO:0000256" key="2">
    <source>
        <dbReference type="SAM" id="MobiDB-lite"/>
    </source>
</evidence>
<evidence type="ECO:0000305" key="3"/>
<proteinExistence type="predicted"/>
<keyword id="KW-1003">Cell membrane</keyword>
<keyword id="KW-0472">Membrane</keyword>
<keyword id="KW-1185">Reference proteome</keyword>
<keyword id="KW-0812">Transmembrane</keyword>
<keyword id="KW-1133">Transmembrane helix</keyword>
<accession>P9WLI4</accession>
<accession>L0TAH7</accession>
<accession>P64951</accession>
<accession>Q10395</accession>
<name>Y2206_MYCTO</name>
<gene>
    <name type="ordered locus">MT2262</name>
</gene>
<feature type="chain" id="PRO_0000427473" description="Uncharacterized protein MT2262">
    <location>
        <begin position="1"/>
        <end position="236"/>
    </location>
</feature>
<feature type="transmembrane region" description="Helical" evidence="1">
    <location>
        <begin position="142"/>
        <end position="162"/>
    </location>
</feature>
<feature type="transmembrane region" description="Helical" evidence="1">
    <location>
        <begin position="166"/>
        <end position="186"/>
    </location>
</feature>
<feature type="region of interest" description="Disordered" evidence="2">
    <location>
        <begin position="1"/>
        <end position="108"/>
    </location>
</feature>
<feature type="compositionally biased region" description="Basic residues" evidence="2">
    <location>
        <begin position="1"/>
        <end position="12"/>
    </location>
</feature>
<feature type="compositionally biased region" description="Basic and acidic residues" evidence="2">
    <location>
        <begin position="13"/>
        <end position="31"/>
    </location>
</feature>
<feature type="compositionally biased region" description="Low complexity" evidence="2">
    <location>
        <begin position="32"/>
        <end position="47"/>
    </location>
</feature>
<feature type="compositionally biased region" description="Basic residues" evidence="2">
    <location>
        <begin position="52"/>
        <end position="65"/>
    </location>
</feature>
<feature type="compositionally biased region" description="Low complexity" evidence="2">
    <location>
        <begin position="67"/>
        <end position="78"/>
    </location>
</feature>
<feature type="compositionally biased region" description="Basic and acidic residues" evidence="2">
    <location>
        <begin position="90"/>
        <end position="108"/>
    </location>
</feature>